<organism>
    <name type="scientific">Dictyoglomus turgidum (strain DSM 6724 / Z-1310)</name>
    <dbReference type="NCBI Taxonomy" id="515635"/>
    <lineage>
        <taxon>Bacteria</taxon>
        <taxon>Pseudomonadati</taxon>
        <taxon>Dictyoglomota</taxon>
        <taxon>Dictyoglomia</taxon>
        <taxon>Dictyoglomales</taxon>
        <taxon>Dictyoglomaceae</taxon>
        <taxon>Dictyoglomus</taxon>
    </lineage>
</organism>
<gene>
    <name evidence="1" type="primary">rpsU</name>
    <name type="ordered locus">Dtur_1330</name>
</gene>
<comment type="similarity">
    <text evidence="1">Belongs to the bacterial ribosomal protein bS21 family.</text>
</comment>
<dbReference type="EMBL" id="CP001251">
    <property type="protein sequence ID" value="ACK42604.1"/>
    <property type="molecule type" value="Genomic_DNA"/>
</dbReference>
<dbReference type="RefSeq" id="WP_012547397.1">
    <property type="nucleotide sequence ID" value="NC_011661.1"/>
</dbReference>
<dbReference type="RefSeq" id="YP_002353218.1">
    <property type="nucleotide sequence ID" value="NC_011661.1"/>
</dbReference>
<dbReference type="SMR" id="B8E0F9"/>
<dbReference type="FunCoup" id="B8E0F9">
    <property type="interactions" value="228"/>
</dbReference>
<dbReference type="STRING" id="515635.Dtur_1330"/>
<dbReference type="EnsemblBacteria" id="ACK42604">
    <property type="protein sequence ID" value="ACK42604"/>
    <property type="gene ID" value="Dtur_1330"/>
</dbReference>
<dbReference type="KEGG" id="dtu:Dtur_1330"/>
<dbReference type="eggNOG" id="COG0828">
    <property type="taxonomic scope" value="Bacteria"/>
</dbReference>
<dbReference type="HOGENOM" id="CLU_159258_3_1_0"/>
<dbReference type="InParanoid" id="B8E0F9"/>
<dbReference type="OrthoDB" id="9799244at2"/>
<dbReference type="Proteomes" id="UP000007719">
    <property type="component" value="Chromosome"/>
</dbReference>
<dbReference type="GO" id="GO:1990904">
    <property type="term" value="C:ribonucleoprotein complex"/>
    <property type="evidence" value="ECO:0007669"/>
    <property type="project" value="UniProtKB-KW"/>
</dbReference>
<dbReference type="GO" id="GO:0005840">
    <property type="term" value="C:ribosome"/>
    <property type="evidence" value="ECO:0007669"/>
    <property type="project" value="UniProtKB-KW"/>
</dbReference>
<dbReference type="GO" id="GO:0003735">
    <property type="term" value="F:structural constituent of ribosome"/>
    <property type="evidence" value="ECO:0007669"/>
    <property type="project" value="InterPro"/>
</dbReference>
<dbReference type="GO" id="GO:0006412">
    <property type="term" value="P:translation"/>
    <property type="evidence" value="ECO:0007669"/>
    <property type="project" value="UniProtKB-UniRule"/>
</dbReference>
<dbReference type="Gene3D" id="1.20.5.1150">
    <property type="entry name" value="Ribosomal protein S8"/>
    <property type="match status" value="1"/>
</dbReference>
<dbReference type="HAMAP" id="MF_00358">
    <property type="entry name" value="Ribosomal_bS21"/>
    <property type="match status" value="1"/>
</dbReference>
<dbReference type="InterPro" id="IPR001911">
    <property type="entry name" value="Ribosomal_bS21"/>
</dbReference>
<dbReference type="InterPro" id="IPR038380">
    <property type="entry name" value="Ribosomal_bS21_sf"/>
</dbReference>
<dbReference type="NCBIfam" id="TIGR00030">
    <property type="entry name" value="S21p"/>
    <property type="match status" value="1"/>
</dbReference>
<dbReference type="PANTHER" id="PTHR21109">
    <property type="entry name" value="MITOCHONDRIAL 28S RIBOSOMAL PROTEIN S21"/>
    <property type="match status" value="1"/>
</dbReference>
<dbReference type="PANTHER" id="PTHR21109:SF22">
    <property type="entry name" value="SMALL RIBOSOMAL SUBUNIT PROTEIN BS21"/>
    <property type="match status" value="1"/>
</dbReference>
<dbReference type="Pfam" id="PF01165">
    <property type="entry name" value="Ribosomal_S21"/>
    <property type="match status" value="1"/>
</dbReference>
<dbReference type="PRINTS" id="PR00976">
    <property type="entry name" value="RIBOSOMALS21"/>
</dbReference>
<sequence>MTEVRVGKDESLDSALKRFKKKLQEDGVLADIRRHEYYEKPSEKRNRKKAQSKKKK</sequence>
<protein>
    <recommendedName>
        <fullName evidence="1">Small ribosomal subunit protein bS21</fullName>
    </recommendedName>
    <alternativeName>
        <fullName evidence="2">30S ribosomal protein S21</fullName>
    </alternativeName>
</protein>
<name>RS21_DICTD</name>
<reference key="1">
    <citation type="journal article" date="2016" name="Front. Microbiol.">
        <title>The complete genome sequence of hyperthermophile Dictyoglomus turgidum DSM 6724 reveals a specialized carbohydrate fermentor.</title>
        <authorList>
            <person name="Brumm P.J."/>
            <person name="Gowda K."/>
            <person name="Robb F.T."/>
            <person name="Mead D.A."/>
        </authorList>
    </citation>
    <scope>NUCLEOTIDE SEQUENCE [LARGE SCALE GENOMIC DNA]</scope>
    <source>
        <strain>DSM 6724 / Z-1310</strain>
    </source>
</reference>
<accession>B8E0F9</accession>
<proteinExistence type="inferred from homology"/>
<keyword id="KW-1185">Reference proteome</keyword>
<keyword id="KW-0687">Ribonucleoprotein</keyword>
<keyword id="KW-0689">Ribosomal protein</keyword>
<feature type="chain" id="PRO_1000120611" description="Small ribosomal subunit protein bS21">
    <location>
        <begin position="1"/>
        <end position="56"/>
    </location>
</feature>
<evidence type="ECO:0000255" key="1">
    <source>
        <dbReference type="HAMAP-Rule" id="MF_00358"/>
    </source>
</evidence>
<evidence type="ECO:0000305" key="2"/>